<dbReference type="EC" id="6.2.1.71" evidence="1"/>
<dbReference type="EMBL" id="U52150">
    <property type="protein sequence ID" value="AAC45927.1"/>
    <property type="molecule type" value="Genomic_DNA"/>
</dbReference>
<dbReference type="EMBL" id="AE003852">
    <property type="protein sequence ID" value="AAF93937.1"/>
    <property type="molecule type" value="Genomic_DNA"/>
</dbReference>
<dbReference type="PIR" id="H82282">
    <property type="entry name" value="H82282"/>
</dbReference>
<dbReference type="RefSeq" id="NP_230421.1">
    <property type="nucleotide sequence ID" value="NC_002505.1"/>
</dbReference>
<dbReference type="RefSeq" id="WP_000205544.1">
    <property type="nucleotide sequence ID" value="NZ_LT906614.1"/>
</dbReference>
<dbReference type="SMR" id="O07899"/>
<dbReference type="STRING" id="243277.VC_0772"/>
<dbReference type="DNASU" id="2615315"/>
<dbReference type="EnsemblBacteria" id="AAF93937">
    <property type="protein sequence ID" value="AAF93937"/>
    <property type="gene ID" value="VC_0772"/>
</dbReference>
<dbReference type="KEGG" id="vch:VC_0772"/>
<dbReference type="PATRIC" id="fig|243277.26.peg.736"/>
<dbReference type="eggNOG" id="COG1021">
    <property type="taxonomic scope" value="Bacteria"/>
</dbReference>
<dbReference type="HOGENOM" id="CLU_000022_59_7_6"/>
<dbReference type="BioCyc" id="MetaCyc:FY484_RS04020-MONOMER"/>
<dbReference type="BRENDA" id="6.2.1.71">
    <property type="organism ID" value="15862"/>
</dbReference>
<dbReference type="UniPathway" id="UPA00022"/>
<dbReference type="Proteomes" id="UP000000584">
    <property type="component" value="Chromosome 1"/>
</dbReference>
<dbReference type="GO" id="GO:0005886">
    <property type="term" value="C:plasma membrane"/>
    <property type="evidence" value="ECO:0007669"/>
    <property type="project" value="UniProtKB-SubCell"/>
</dbReference>
<dbReference type="GO" id="GO:0008668">
    <property type="term" value="F:2,3-dihydroxybenzoate--[aryl-carrier protein] ligase"/>
    <property type="evidence" value="ECO:0007669"/>
    <property type="project" value="InterPro"/>
</dbReference>
<dbReference type="GO" id="GO:0019290">
    <property type="term" value="P:siderophore biosynthetic process"/>
    <property type="evidence" value="ECO:0007669"/>
    <property type="project" value="InterPro"/>
</dbReference>
<dbReference type="GO" id="GO:0019537">
    <property type="term" value="P:vibriobactin biosynthetic process"/>
    <property type="evidence" value="ECO:0007669"/>
    <property type="project" value="UniProtKB-UniPathway"/>
</dbReference>
<dbReference type="CDD" id="cd05920">
    <property type="entry name" value="23DHB-AMP_lg"/>
    <property type="match status" value="1"/>
</dbReference>
<dbReference type="FunFam" id="3.30.300.30:FF:000008">
    <property type="entry name" value="2,3-dihydroxybenzoate-AMP ligase"/>
    <property type="match status" value="1"/>
</dbReference>
<dbReference type="FunFam" id="2.30.38.10:FF:000003">
    <property type="entry name" value="Vibriobactin-specific 2,3-dihydroxybenzoate-AMP ligase"/>
    <property type="match status" value="1"/>
</dbReference>
<dbReference type="FunFam" id="3.40.50.980:FF:000003">
    <property type="entry name" value="Vibriobactin-specific 2,3-dihydroxybenzoate-AMP ligase"/>
    <property type="match status" value="1"/>
</dbReference>
<dbReference type="Gene3D" id="3.30.300.30">
    <property type="match status" value="1"/>
</dbReference>
<dbReference type="Gene3D" id="3.40.50.980">
    <property type="match status" value="2"/>
</dbReference>
<dbReference type="Gene3D" id="2.30.38.10">
    <property type="entry name" value="Luciferase, Domain 3"/>
    <property type="match status" value="1"/>
</dbReference>
<dbReference type="InterPro" id="IPR025110">
    <property type="entry name" value="AMP-bd_C"/>
</dbReference>
<dbReference type="InterPro" id="IPR045851">
    <property type="entry name" value="AMP-bd_C_sf"/>
</dbReference>
<dbReference type="InterPro" id="IPR020845">
    <property type="entry name" value="AMP-binding_CS"/>
</dbReference>
<dbReference type="InterPro" id="IPR000873">
    <property type="entry name" value="AMP-dep_synth/lig_dom"/>
</dbReference>
<dbReference type="InterPro" id="IPR050237">
    <property type="entry name" value="ATP-dep_AMP-bd_enzyme"/>
</dbReference>
<dbReference type="InterPro" id="IPR011963">
    <property type="entry name" value="DHB_AMP_lig"/>
</dbReference>
<dbReference type="NCBIfam" id="TIGR02275">
    <property type="entry name" value="DHB_AMP_lig"/>
    <property type="match status" value="1"/>
</dbReference>
<dbReference type="PANTHER" id="PTHR43767">
    <property type="entry name" value="LONG-CHAIN-FATTY-ACID--COA LIGASE"/>
    <property type="match status" value="1"/>
</dbReference>
<dbReference type="PANTHER" id="PTHR43767:SF1">
    <property type="entry name" value="NONRIBOSOMAL PEPTIDE SYNTHASE PES1 (EUROFUNG)-RELATED"/>
    <property type="match status" value="1"/>
</dbReference>
<dbReference type="Pfam" id="PF00501">
    <property type="entry name" value="AMP-binding"/>
    <property type="match status" value="1"/>
</dbReference>
<dbReference type="Pfam" id="PF13193">
    <property type="entry name" value="AMP-binding_C"/>
    <property type="match status" value="1"/>
</dbReference>
<dbReference type="SUPFAM" id="SSF56801">
    <property type="entry name" value="Acetyl-CoA synthetase-like"/>
    <property type="match status" value="1"/>
</dbReference>
<dbReference type="PROSITE" id="PS00455">
    <property type="entry name" value="AMP_BINDING"/>
    <property type="match status" value="1"/>
</dbReference>
<sequence length="543" mass="60065">MTTDFTPWPEALAAQYRQLGYWQDKTLLDYLQQSAERTPNALALVGDNQQWRYQAMLERIEQLAAGFTELGLGCGDNVVLQLGNVAEFYLCFFALLRQGIRPILALPAHRLAEIRYFCQHSQAKAYLIDGAQRPFDYQALAQELLACCPTLQTVIVRGQTRVTDPKFIELASCYSASSCQANADPNQIAFFQLSGGTTGTPKLIPRTHNDYAYSVTASVEICRFDQHTRYLCVLPAAHNFPLSSPGALGVFWAGGCVVLSQDASPQHAFKLIEQHKITVTALVPPLALLWMDHAEKSTYDLSSLHFVQVGGAKFSEAAARRLPKALGCQLQQVFGMAEGLVNYTRLDDSAELIATTQGRPISAHDQLLVVDEQGQPVASGEEGYLLTQGPYTIRGYYRADQHNQRAFNAQGFYITGDKVKLSSEGYVIVTGRAKDQINRGGEKIAAEEVENQLLHHPAVHDAALIAISDEYLGERSCAVIVLKPEQSVNTIQLKRFLHQAGLADYKIPDQIQFIDQLPKTSVGKIDKNALRRRFDTLGLALMS</sequence>
<reference key="1">
    <citation type="journal article" date="1997" name="J. Bacteriol.">
        <title>Cloning of a Vibrio cholerae vibriobactin gene cluster: identification of genes required for early steps in siderophore biosynthesis.</title>
        <authorList>
            <person name="Wyckoff E.E."/>
            <person name="Stoebner J.A."/>
            <person name="Reed K.E."/>
            <person name="Payne S.M."/>
        </authorList>
    </citation>
    <scope>NUCLEOTIDE SEQUENCE [GENOMIC DNA]</scope>
    <source>
        <strain>El Tor Lou15</strain>
    </source>
</reference>
<reference key="2">
    <citation type="journal article" date="2000" name="Nature">
        <title>DNA sequence of both chromosomes of the cholera pathogen Vibrio cholerae.</title>
        <authorList>
            <person name="Heidelberg J.F."/>
            <person name="Eisen J.A."/>
            <person name="Nelson W.C."/>
            <person name="Clayton R.A."/>
            <person name="Gwinn M.L."/>
            <person name="Dodson R.J."/>
            <person name="Haft D.H."/>
            <person name="Hickey E.K."/>
            <person name="Peterson J.D."/>
            <person name="Umayam L.A."/>
            <person name="Gill S.R."/>
            <person name="Nelson K.E."/>
            <person name="Read T.D."/>
            <person name="Tettelin H."/>
            <person name="Richardson D.L."/>
            <person name="Ermolaeva M.D."/>
            <person name="Vamathevan J.J."/>
            <person name="Bass S."/>
            <person name="Qin H."/>
            <person name="Dragoi I."/>
            <person name="Sellers P."/>
            <person name="McDonald L.A."/>
            <person name="Utterback T.R."/>
            <person name="Fleischmann R.D."/>
            <person name="Nierman W.C."/>
            <person name="White O."/>
            <person name="Salzberg S.L."/>
            <person name="Smith H.O."/>
            <person name="Colwell R.R."/>
            <person name="Mekalanos J.J."/>
            <person name="Venter J.C."/>
            <person name="Fraser C.M."/>
        </authorList>
    </citation>
    <scope>NUCLEOTIDE SEQUENCE [LARGE SCALE GENOMIC DNA]</scope>
    <source>
        <strain>ATCC 39315 / El Tor Inaba N16961</strain>
    </source>
</reference>
<keyword id="KW-0997">Cell inner membrane</keyword>
<keyword id="KW-1003">Cell membrane</keyword>
<keyword id="KW-0436">Ligase</keyword>
<keyword id="KW-0472">Membrane</keyword>
<keyword id="KW-1185">Reference proteome</keyword>
<keyword id="KW-0812">Transmembrane</keyword>
<keyword id="KW-1133">Transmembrane helix</keyword>
<name>VIBE_VIBCH</name>
<evidence type="ECO:0000250" key="1">
    <source>
        <dbReference type="UniProtKB" id="P10378"/>
    </source>
</evidence>
<evidence type="ECO:0000255" key="2"/>
<evidence type="ECO:0000305" key="3"/>
<feature type="chain" id="PRO_0000193080" description="Vibriobactin-specific 2,3-dihydroxybenzoate-AMP ligase">
    <location>
        <begin position="1"/>
        <end position="543"/>
    </location>
</feature>
<feature type="transmembrane region" description="Helical" evidence="2">
    <location>
        <begin position="240"/>
        <end position="259"/>
    </location>
</feature>
<organism>
    <name type="scientific">Vibrio cholerae serotype O1 (strain ATCC 39315 / El Tor Inaba N16961)</name>
    <dbReference type="NCBI Taxonomy" id="243277"/>
    <lineage>
        <taxon>Bacteria</taxon>
        <taxon>Pseudomonadati</taxon>
        <taxon>Pseudomonadota</taxon>
        <taxon>Gammaproteobacteria</taxon>
        <taxon>Vibrionales</taxon>
        <taxon>Vibrionaceae</taxon>
        <taxon>Vibrio</taxon>
    </lineage>
</organism>
<proteinExistence type="inferred from homology"/>
<protein>
    <recommendedName>
        <fullName>Vibriobactin-specific 2,3-dihydroxybenzoate-AMP ligase</fullName>
        <ecNumber evidence="1">6.2.1.71</ecNumber>
    </recommendedName>
    <alternativeName>
        <fullName>Dihydroxybenzoic acid-activating enzyme</fullName>
    </alternativeName>
</protein>
<accession>O07899</accession>
<accession>Q9JQ10</accession>
<gene>
    <name type="primary">vibE</name>
    <name type="ordered locus">VC_0772</name>
</gene>
<comment type="function">
    <text evidence="1">Activation of the carboxylate group of 2,3-dihydroxy-benzoate (DHB), via ATP-dependent PPi exchange reactions, to the acyladenylate, preparing that molecule for the final stages of vibriobactin synthesis.</text>
</comment>
<comment type="catalytic activity">
    <reaction evidence="1">
        <text>2,3-dihydroxybenzoate + holo-[ACP] + ATP = 2,3-dihydroxybenzoyl-[ACP] + AMP + diphosphate</text>
        <dbReference type="Rhea" id="RHEA:61652"/>
        <dbReference type="Rhea" id="RHEA-COMP:9685"/>
        <dbReference type="Rhea" id="RHEA-COMP:19024"/>
        <dbReference type="ChEBI" id="CHEBI:30616"/>
        <dbReference type="ChEBI" id="CHEBI:33019"/>
        <dbReference type="ChEBI" id="CHEBI:36654"/>
        <dbReference type="ChEBI" id="CHEBI:64479"/>
        <dbReference type="ChEBI" id="CHEBI:90610"/>
        <dbReference type="ChEBI" id="CHEBI:456215"/>
        <dbReference type="EC" id="6.2.1.71"/>
    </reaction>
</comment>
<comment type="pathway">
    <text>Siderophore biosynthesis; vibriobactin biosynthesis.</text>
</comment>
<comment type="subcellular location">
    <subcellularLocation>
        <location evidence="3">Cell inner membrane</location>
        <topology evidence="3">Single-pass membrane protein</topology>
    </subcellularLocation>
</comment>
<comment type="similarity">
    <text evidence="3">Belongs to the ATP-dependent AMP-binding enzyme family.</text>
</comment>